<sequence length="461" mass="50075">MSTAGVAAQDIRVPLKTGFLHNGQALGNMKSCWGSHSEFENNFLNIDPITMAYNLNSPAQEHLTTVGCAARSAPGSGHFFAECGPSPRSSLPPLVISPSESSGQREEDQVMCGFKKLSVNGVCTSTPPLTPIKSCPSPFPCAALCDRGSRPLPPLPISEDLCVDEADSEVELLTTSSDTDLLLEDSAPSDFKYDAPGRRSFRGCGQINYAYFDSPTVSVADLSCASDQNRVVPDPNPPPPQSHRRLRRSHSGPAGSFNKPAIRISSCTHRASPSSDEDKPEVPPRVPIPPRPAKPDYRRWSAEVTSNTYSDEDRPPKVPPREPLSRSNSRTPSPKSLPSYLNGVMPPTQSFAPDPKYVSSKALQRQSSEGSANKVPCILPIIENGKKVSSTHYYLLPERPPYLDKYEKYFKEAEETNPSTQIQPLPAACGMASATEKLASRMKIDMGSHGKRKHLSYVVSP</sequence>
<name>ERRFI_MOUSE</name>
<reference key="1">
    <citation type="journal article" date="2004" name="Genome Res.">
        <title>The status, quality, and expansion of the NIH full-length cDNA project: the Mammalian Gene Collection (MGC).</title>
        <authorList>
            <consortium name="The MGC Project Team"/>
        </authorList>
    </citation>
    <scope>NUCLEOTIDE SEQUENCE [LARGE SCALE MRNA]</scope>
    <source>
        <strain>FVB/N</strain>
        <tissue>Mammary gland</tissue>
    </source>
</reference>
<reference key="2">
    <citation type="journal article" date="2006" name="Nat. Med.">
        <title>Mig6 is a negative regulator of EGF receptor-mediated skin morphogenesis and tumor formation.</title>
        <authorList>
            <person name="Ferby I."/>
            <person name="Reschke M."/>
            <person name="Kudlacek O."/>
            <person name="Knyazev P."/>
            <person name="Pante G."/>
            <person name="Amann K."/>
            <person name="Sommergruber W."/>
            <person name="Kraut N."/>
            <person name="Ullrich A."/>
            <person name="Fassler R."/>
            <person name="Klein R."/>
        </authorList>
    </citation>
    <scope>DISRUPTION PHENOTYPE</scope>
    <scope>FUNCTION</scope>
    <scope>SUBCELLULAR LOCATION</scope>
    <scope>TISSUE SPECIFICITY</scope>
</reference>
<reference key="3">
    <citation type="journal article" date="2006" name="Nat. Med.">
        <authorList>
            <person name="Ferby I."/>
            <person name="Reschke M."/>
            <person name="Kudlacek O."/>
            <person name="Knyazev P."/>
            <person name="Pante G."/>
            <person name="Amann K."/>
            <person name="Sommergruber W."/>
            <person name="Kraut N."/>
            <person name="Ullrich A."/>
            <person name="Fassler R."/>
            <person name="Klein R."/>
        </authorList>
    </citation>
    <scope>ERRATUM OF PUBMED:16648858</scope>
</reference>
<reference key="4">
    <citation type="journal article" date="2007" name="Proc. Natl. Acad. Sci. U.S.A.">
        <title>Large-scale phosphorylation analysis of mouse liver.</title>
        <authorList>
            <person name="Villen J."/>
            <person name="Beausoleil S.A."/>
            <person name="Gerber S.A."/>
            <person name="Gygi S.P."/>
        </authorList>
    </citation>
    <scope>PHOSPHORYLATION [LARGE SCALE ANALYSIS] AT THR-130; SER-251; SER-272 AND SER-301</scope>
    <scope>IDENTIFICATION BY MASS SPECTROMETRY [LARGE SCALE ANALYSIS]</scope>
    <source>
        <tissue>Liver</tissue>
    </source>
</reference>
<reference key="5">
    <citation type="journal article" date="2009" name="Development">
        <title>Mig-6 is required for appropriate lung development and to ensure normal adult lung homeostasis.</title>
        <authorList>
            <person name="Jin N."/>
            <person name="Cho S.N."/>
            <person name="Raso M.G."/>
            <person name="Wistuba I."/>
            <person name="Smith Y."/>
            <person name="Yang Y."/>
            <person name="Kurie J.M."/>
            <person name="Yen R."/>
            <person name="Evans C.M."/>
            <person name="Ludwig T."/>
            <person name="Jeong J.W."/>
            <person name="DeMayo F.J."/>
        </authorList>
    </citation>
    <scope>DISRUPTION PHENOTYPE</scope>
    <scope>FUNCTION</scope>
    <scope>TISSUE SPECIFICITY</scope>
    <scope>DEVELOPMENTAL STAGE</scope>
</reference>
<reference key="6">
    <citation type="journal article" date="2009" name="Mol. Cell">
        <title>Negative regulation of the EGFR-MAPK cascade by actin-MAL-mediated Mig6/Errfi-1 induction.</title>
        <authorList>
            <person name="Descot A."/>
            <person name="Hoffmann R."/>
            <person name="Shaposhnikov D."/>
            <person name="Reschke M."/>
            <person name="Ullrich A."/>
            <person name="Posern G."/>
        </authorList>
    </citation>
    <scope>INDUCTION</scope>
    <scope>FUNCTION</scope>
</reference>
<reference key="7">
    <citation type="journal article" date="2009" name="Proc. Natl. Acad. Sci. U.S.A.">
        <title>Mig-6 modulates uterine steroid hormone responsiveness and exhibits altered expression in endometrial disease.</title>
        <authorList>
            <person name="Jeong J.W."/>
            <person name="Lee H.S."/>
            <person name="Lee K.Y."/>
            <person name="White L.D."/>
            <person name="Broaddus R.R."/>
            <person name="Zhang Y.W."/>
            <person name="Vande Woude G.F."/>
            <person name="Giudice L.C."/>
            <person name="Young S.L."/>
            <person name="Lessey B.A."/>
            <person name="Tsai S.Y."/>
            <person name="Lydon J.P."/>
            <person name="DeMayo F.J."/>
        </authorList>
    </citation>
    <scope>DISRUPTION PHENOTYPE</scope>
    <scope>FUNCTION</scope>
    <scope>INDUCTION</scope>
</reference>
<reference key="8">
    <citation type="journal article" date="2010" name="Biol. Reprod.">
        <title>ERBB receptor feedback inhibitor 1 regulation of estrogen receptor activity is critical for uterine implantation in mice.</title>
        <authorList>
            <person name="Kim T.H."/>
            <person name="Lee D.K."/>
            <person name="Franco H.L."/>
            <person name="Lydon J.P."/>
            <person name="Jeong J.W."/>
        </authorList>
    </citation>
    <scope>DISRUPTION PHENOTYPE</scope>
    <scope>FUNCTION</scope>
    <scope>INDUCTION</scope>
</reference>
<reference key="9">
    <citation type="journal article" date="2010" name="Cell">
        <title>A tissue-specific atlas of mouse protein phosphorylation and expression.</title>
        <authorList>
            <person name="Huttlin E.L."/>
            <person name="Jedrychowski M.P."/>
            <person name="Elias J.E."/>
            <person name="Goswami T."/>
            <person name="Rad R."/>
            <person name="Beausoleil S.A."/>
            <person name="Villen J."/>
            <person name="Haas W."/>
            <person name="Sowa M.E."/>
            <person name="Gygi S.P."/>
        </authorList>
    </citation>
    <scope>PHOSPHORYLATION [LARGE SCALE ANALYSIS] AT THR-126 AND THR-130</scope>
    <scope>IDENTIFICATION BY MASS SPECTROMETRY [LARGE SCALE ANALYSIS]</scope>
    <source>
        <tissue>Brown adipose tissue</tissue>
        <tissue>Kidney</tissue>
    </source>
</reference>
<protein>
    <recommendedName>
        <fullName>ERBB receptor feedback inhibitor 1</fullName>
    </recommendedName>
    <alternativeName>
        <fullName>Mitogen-inducible gene 6 protein homolog</fullName>
        <shortName>MIG-6</shortName>
    </alternativeName>
</protein>
<accession>Q99JZ7</accession>
<keyword id="KW-0007">Acetylation</keyword>
<keyword id="KW-1003">Cell membrane</keyword>
<keyword id="KW-0963">Cytoplasm</keyword>
<keyword id="KW-0472">Membrane</keyword>
<keyword id="KW-0539">Nucleus</keyword>
<keyword id="KW-0597">Phosphoprotein</keyword>
<keyword id="KW-1185">Reference proteome</keyword>
<keyword id="KW-0043">Tumor suppressor</keyword>
<proteinExistence type="evidence at protein level"/>
<feature type="initiator methionine" description="Removed" evidence="2">
    <location>
        <position position="1"/>
    </location>
</feature>
<feature type="chain" id="PRO_0000096488" description="ERBB receptor feedback inhibitor 1">
    <location>
        <begin position="2"/>
        <end position="461"/>
    </location>
</feature>
<feature type="region of interest" description="Disordered" evidence="3">
    <location>
        <begin position="228"/>
        <end position="353"/>
    </location>
</feature>
<feature type="region of interest" description="Interaction with EGFR and ERBB2 and regulation of EGFR activation" evidence="1">
    <location>
        <begin position="333"/>
        <end position="362"/>
    </location>
</feature>
<feature type="compositionally biased region" description="Polar residues" evidence="3">
    <location>
        <begin position="265"/>
        <end position="274"/>
    </location>
</feature>
<feature type="compositionally biased region" description="Pro residues" evidence="3">
    <location>
        <begin position="283"/>
        <end position="292"/>
    </location>
</feature>
<feature type="compositionally biased region" description="Basic and acidic residues" evidence="3">
    <location>
        <begin position="311"/>
        <end position="324"/>
    </location>
</feature>
<feature type="compositionally biased region" description="Polar residues" evidence="3">
    <location>
        <begin position="325"/>
        <end position="336"/>
    </location>
</feature>
<feature type="modified residue" description="N-acetylserine" evidence="2">
    <location>
        <position position="2"/>
    </location>
</feature>
<feature type="modified residue" description="Phosphothreonine" evidence="12">
    <location>
        <position position="126"/>
    </location>
</feature>
<feature type="modified residue" description="Phosphothreonine" evidence="11 12">
    <location>
        <position position="130"/>
    </location>
</feature>
<feature type="modified residue" description="Phosphoserine" evidence="11">
    <location>
        <position position="251"/>
    </location>
</feature>
<feature type="modified residue" description="Phosphoserine" evidence="11">
    <location>
        <position position="272"/>
    </location>
</feature>
<feature type="modified residue" description="Phosphoserine" evidence="11">
    <location>
        <position position="301"/>
    </location>
</feature>
<feature type="modified residue" description="Phosphoserine" evidence="2">
    <location>
        <position position="460"/>
    </location>
</feature>
<gene>
    <name type="primary">Errfi1</name>
    <name type="synonym">Mig6</name>
</gene>
<comment type="function">
    <text evidence="4 5 6 7 8">Negative regulator of EGFR signaling in skin morphogenesis. Acts as a negative regulator for several EGFR family members, including ERBB2, ERBB3 and ERBB4. Inhibits EGFR catalytic activity by interfering with its dimerization. Inhibits autophosphorylation of EGFR, ERBB2 and ERBB4. Important for normal keratinocyte proliferation and differentiation. Plays a role in modulating the response to steroid hormones in the uterus. Required for normal response to progesterone in the uterus and for fertility. Mediates epithelial estrogen responses in the uterus by regulating ESR1 levels and activation. Important for regulation of endometrium cell proliferation. Important for normal prenatal and perinatal lung development.</text>
</comment>
<comment type="subunit">
    <text evidence="1">Interacts with EGFR (By similarity). Interacts with ERBB2.</text>
</comment>
<comment type="interaction">
    <interactant intactId="EBI-643375">
        <id>Q99JZ7</id>
    </interactant>
    <interactant intactId="EBI-1688">
        <id>Q60631</id>
        <label>Grb2</label>
    </interactant>
    <organismsDiffer>false</organismsDiffer>
    <experiments>3</experiments>
</comment>
<comment type="subcellular location">
    <subcellularLocation>
        <location evidence="4">Cytoplasm</location>
    </subcellularLocation>
    <subcellularLocation>
        <location evidence="4">Cell membrane</location>
        <topology evidence="4">Peripheral membrane protein</topology>
        <orientation evidence="4">Cytoplasmic side</orientation>
    </subcellularLocation>
    <subcellularLocation>
        <location evidence="10">Nucleus</location>
    </subcellularLocation>
    <text>Associated with the plasma membrane of basal skin keratinocytes. Translocates into the nucleus of differentiating suprabasal keratinocytes.</text>
</comment>
<comment type="tissue specificity">
    <text evidence="4 7">Detected in lung, in airway epithelial cells and alveolar type 2 cells (at protein level). Detected in uterus stroma, luminal epithelium and glandular epithelium.</text>
</comment>
<comment type="developmental stage">
    <text evidence="7">Detected at low levels during embryogenesis. Strongly up-regulated during the first days after birth. Levels are increased on the first day after birth, and culminate three days after birth. Detected at low levels four days after birth, and throughout the remaining life span.</text>
</comment>
<comment type="induction">
    <text evidence="5 6 8">Up-regulated by lysophosphatidic acid (LPA) and sphingosine 1-phosphate. Up-regulated by globular actin monomers, via MKL1 signaling. Up-regulated in uterus in response to progesterone. Up-regulated in uterus in response to estrogen. Up-regulated in pregnant uterus.</text>
</comment>
<comment type="domain">
    <text evidence="1">The EGFR-binding region prevents binding of a cyclin-like activator to the EGFR kinase domain, and thereby keeps EGFR in an inactive conformation. Also maintains EGFR in an inactive conformation by preventing formation of an asymmetric homodimer (By similarity).</text>
</comment>
<comment type="disruption phenotype">
    <text evidence="4 5 7 8">Embryos are present at the expected Mendelian ratio, but half of the mice die before adolescence, due to defects in prenatal and perinatal lung development. In the 15.5 dpc embryo, lungs are smaller, have a less complex structure than normal, and present fewer blood vessels. Lungs in newborns present abnormal patterns of cell proliferation and apoptosis. Adults develop chronic obstructive pulmonary disease (COPD). Mice present epidermal hyperplasia with thickening and flaking skin and ulcerations on tail and footpads. Papillomas develop at sites of wounding. Mice are highly susceptible to chemical carcinogens and develop melanomas and/or papillomas after application of a carcinogen. They have a high incidence of spontaneous hyperplastic and neoplastic lesions, such as adenocarcinomas or squamous cell carcinomas. They present bone and cartilage hyperplasia, leading to fixed joints. Mice have altered response to progesterone in the uterus, resulting in endometrial epithelial hyperplasia and complete loss of fertility. Mice have a shortened life span and die prematurely at an age of five to seven months.</text>
</comment>
<comment type="similarity">
    <text evidence="9">Belongs to the MIG6 family.</text>
</comment>
<organism>
    <name type="scientific">Mus musculus</name>
    <name type="common">Mouse</name>
    <dbReference type="NCBI Taxonomy" id="10090"/>
    <lineage>
        <taxon>Eukaryota</taxon>
        <taxon>Metazoa</taxon>
        <taxon>Chordata</taxon>
        <taxon>Craniata</taxon>
        <taxon>Vertebrata</taxon>
        <taxon>Euteleostomi</taxon>
        <taxon>Mammalia</taxon>
        <taxon>Eutheria</taxon>
        <taxon>Euarchontoglires</taxon>
        <taxon>Glires</taxon>
        <taxon>Rodentia</taxon>
        <taxon>Myomorpha</taxon>
        <taxon>Muroidea</taxon>
        <taxon>Muridae</taxon>
        <taxon>Murinae</taxon>
        <taxon>Mus</taxon>
        <taxon>Mus</taxon>
    </lineage>
</organism>
<dbReference type="EMBL" id="BC005546">
    <property type="protein sequence ID" value="AAH05546.1"/>
    <property type="molecule type" value="mRNA"/>
</dbReference>
<dbReference type="EMBL" id="BC057646">
    <property type="protein sequence ID" value="AAH57646.1"/>
    <property type="molecule type" value="mRNA"/>
</dbReference>
<dbReference type="CCDS" id="CCDS18974.1"/>
<dbReference type="RefSeq" id="NP_001343252.1">
    <property type="nucleotide sequence ID" value="NM_001356323.1"/>
</dbReference>
<dbReference type="RefSeq" id="NP_598514.1">
    <property type="nucleotide sequence ID" value="NM_133753.2"/>
</dbReference>
<dbReference type="RefSeq" id="XP_006539273.1">
    <property type="nucleotide sequence ID" value="XM_006539210.1"/>
</dbReference>
<dbReference type="BioGRID" id="216532">
    <property type="interactions" value="1"/>
</dbReference>
<dbReference type="FunCoup" id="Q99JZ7">
    <property type="interactions" value="670"/>
</dbReference>
<dbReference type="IntAct" id="Q99JZ7">
    <property type="interactions" value="2"/>
</dbReference>
<dbReference type="STRING" id="10090.ENSMUSP00000030811"/>
<dbReference type="iPTMnet" id="Q99JZ7"/>
<dbReference type="PhosphoSitePlus" id="Q99JZ7"/>
<dbReference type="jPOST" id="Q99JZ7"/>
<dbReference type="PaxDb" id="10090-ENSMUSP00000030811"/>
<dbReference type="ProteomicsDB" id="275889"/>
<dbReference type="Pumba" id="Q99JZ7"/>
<dbReference type="Antibodypedia" id="27548">
    <property type="antibodies" value="206 antibodies from 29 providers"/>
</dbReference>
<dbReference type="DNASU" id="74155"/>
<dbReference type="Ensembl" id="ENSMUST00000030811.2">
    <property type="protein sequence ID" value="ENSMUSP00000030811.2"/>
    <property type="gene ID" value="ENSMUSG00000028967.11"/>
</dbReference>
<dbReference type="Ensembl" id="ENSMUST00000073600.9">
    <property type="protein sequence ID" value="ENSMUSP00000073285.3"/>
    <property type="gene ID" value="ENSMUSG00000028967.11"/>
</dbReference>
<dbReference type="GeneID" id="74155"/>
<dbReference type="KEGG" id="mmu:74155"/>
<dbReference type="UCSC" id="uc008vxw.1">
    <property type="organism name" value="mouse"/>
</dbReference>
<dbReference type="AGR" id="MGI:1921405"/>
<dbReference type="CTD" id="54206"/>
<dbReference type="MGI" id="MGI:1921405">
    <property type="gene designation" value="Errfi1"/>
</dbReference>
<dbReference type="VEuPathDB" id="HostDB:ENSMUSG00000028967"/>
<dbReference type="eggNOG" id="ENOG502QPQW">
    <property type="taxonomic scope" value="Eukaryota"/>
</dbReference>
<dbReference type="GeneTree" id="ENSGT00440000033870"/>
<dbReference type="HOGENOM" id="CLU_604032_0_0_1"/>
<dbReference type="InParanoid" id="Q99JZ7"/>
<dbReference type="OMA" id="YERHKHS"/>
<dbReference type="OrthoDB" id="9931672at2759"/>
<dbReference type="PhylomeDB" id="Q99JZ7"/>
<dbReference type="TreeFam" id="TF335720"/>
<dbReference type="BioGRID-ORCS" id="74155">
    <property type="hits" value="2 hits in 78 CRISPR screens"/>
</dbReference>
<dbReference type="ChiTaRS" id="Errfi1">
    <property type="organism name" value="mouse"/>
</dbReference>
<dbReference type="PRO" id="PR:Q99JZ7"/>
<dbReference type="Proteomes" id="UP000000589">
    <property type="component" value="Chromosome 4"/>
</dbReference>
<dbReference type="RNAct" id="Q99JZ7">
    <property type="molecule type" value="protein"/>
</dbReference>
<dbReference type="Bgee" id="ENSMUSG00000028967">
    <property type="expression patterns" value="Expressed in left lobe of liver and 263 other cell types or tissues"/>
</dbReference>
<dbReference type="ExpressionAtlas" id="Q99JZ7">
    <property type="expression patterns" value="baseline and differential"/>
</dbReference>
<dbReference type="GO" id="GO:0005737">
    <property type="term" value="C:cytoplasm"/>
    <property type="evidence" value="ECO:0000314"/>
    <property type="project" value="UniProtKB"/>
</dbReference>
<dbReference type="GO" id="GO:0005829">
    <property type="term" value="C:cytosol"/>
    <property type="evidence" value="ECO:0000266"/>
    <property type="project" value="MGI"/>
</dbReference>
<dbReference type="GO" id="GO:0005634">
    <property type="term" value="C:nucleus"/>
    <property type="evidence" value="ECO:0007669"/>
    <property type="project" value="UniProtKB-SubCell"/>
</dbReference>
<dbReference type="GO" id="GO:0005886">
    <property type="term" value="C:plasma membrane"/>
    <property type="evidence" value="ECO:0000314"/>
    <property type="project" value="UniProtKB"/>
</dbReference>
<dbReference type="GO" id="GO:0019901">
    <property type="term" value="F:protein kinase binding"/>
    <property type="evidence" value="ECO:0007669"/>
    <property type="project" value="Ensembl"/>
</dbReference>
<dbReference type="GO" id="GO:0017124">
    <property type="term" value="F:SH3 domain binding"/>
    <property type="evidence" value="ECO:0007669"/>
    <property type="project" value="Ensembl"/>
</dbReference>
<dbReference type="GO" id="GO:0031267">
    <property type="term" value="F:small GTPase binding"/>
    <property type="evidence" value="ECO:0007669"/>
    <property type="project" value="Ensembl"/>
</dbReference>
<dbReference type="GO" id="GO:0006915">
    <property type="term" value="P:apoptotic process"/>
    <property type="evidence" value="ECO:0000314"/>
    <property type="project" value="MGI"/>
</dbReference>
<dbReference type="GO" id="GO:0006699">
    <property type="term" value="P:bile acid biosynthetic process"/>
    <property type="evidence" value="ECO:0000315"/>
    <property type="project" value="MGI"/>
</dbReference>
<dbReference type="GO" id="GO:0051216">
    <property type="term" value="P:cartilage development"/>
    <property type="evidence" value="ECO:0000315"/>
    <property type="project" value="MGI"/>
</dbReference>
<dbReference type="GO" id="GO:0016477">
    <property type="term" value="P:cell migration"/>
    <property type="evidence" value="ECO:0000314"/>
    <property type="project" value="MGI"/>
</dbReference>
<dbReference type="GO" id="GO:0071474">
    <property type="term" value="P:cellular hyperosmotic response"/>
    <property type="evidence" value="ECO:0007669"/>
    <property type="project" value="Ensembl"/>
</dbReference>
<dbReference type="GO" id="GO:0071549">
    <property type="term" value="P:cellular response to dexamethasone stimulus"/>
    <property type="evidence" value="ECO:0007669"/>
    <property type="project" value="Ensembl"/>
</dbReference>
<dbReference type="GO" id="GO:0071364">
    <property type="term" value="P:cellular response to epidermal growth factor stimulus"/>
    <property type="evidence" value="ECO:0007669"/>
    <property type="project" value="Ensembl"/>
</dbReference>
<dbReference type="GO" id="GO:0032869">
    <property type="term" value="P:cellular response to insulin stimulus"/>
    <property type="evidence" value="ECO:0007669"/>
    <property type="project" value="Ensembl"/>
</dbReference>
<dbReference type="GO" id="GO:0036120">
    <property type="term" value="P:cellular response to platelet-derived growth factor stimulus"/>
    <property type="evidence" value="ECO:0007669"/>
    <property type="project" value="Ensembl"/>
</dbReference>
<dbReference type="GO" id="GO:0042632">
    <property type="term" value="P:cholesterol homeostasis"/>
    <property type="evidence" value="ECO:0000315"/>
    <property type="project" value="MGI"/>
</dbReference>
<dbReference type="GO" id="GO:0008203">
    <property type="term" value="P:cholesterol metabolic process"/>
    <property type="evidence" value="ECO:0000315"/>
    <property type="project" value="MGI"/>
</dbReference>
<dbReference type="GO" id="GO:0035988">
    <property type="term" value="P:chondrocyte proliferation"/>
    <property type="evidence" value="ECO:0000315"/>
    <property type="project" value="MGI"/>
</dbReference>
<dbReference type="GO" id="GO:0007566">
    <property type="term" value="P:embryo implantation"/>
    <property type="evidence" value="ECO:0000315"/>
    <property type="project" value="MGI"/>
</dbReference>
<dbReference type="GO" id="GO:0007173">
    <property type="term" value="P:epidermal growth factor receptor signaling pathway"/>
    <property type="evidence" value="ECO:0000314"/>
    <property type="project" value="MGI"/>
</dbReference>
<dbReference type="GO" id="GO:0050673">
    <property type="term" value="P:epithelial cell proliferation"/>
    <property type="evidence" value="ECO:0000315"/>
    <property type="project" value="MGI"/>
</dbReference>
<dbReference type="GO" id="GO:0060429">
    <property type="term" value="P:epithelium development"/>
    <property type="evidence" value="ECO:0000315"/>
    <property type="project" value="MGI"/>
</dbReference>
<dbReference type="GO" id="GO:0060613">
    <property type="term" value="P:fat pad development"/>
    <property type="evidence" value="ECO:0000315"/>
    <property type="project" value="MGI"/>
</dbReference>
<dbReference type="GO" id="GO:0010467">
    <property type="term" value="P:gene expression"/>
    <property type="evidence" value="ECO:0000315"/>
    <property type="project" value="MGI"/>
</dbReference>
<dbReference type="GO" id="GO:0006006">
    <property type="term" value="P:glucose metabolic process"/>
    <property type="evidence" value="ECO:0000315"/>
    <property type="project" value="MGI"/>
</dbReference>
<dbReference type="GO" id="GO:0036022">
    <property type="term" value="P:limb joint morphogenesis"/>
    <property type="evidence" value="ECO:0000315"/>
    <property type="project" value="MGI"/>
</dbReference>
<dbReference type="GO" id="GO:0006629">
    <property type="term" value="P:lipid metabolic process"/>
    <property type="evidence" value="ECO:0000315"/>
    <property type="project" value="MGI"/>
</dbReference>
<dbReference type="GO" id="GO:0001889">
    <property type="term" value="P:liver development"/>
    <property type="evidence" value="ECO:0000315"/>
    <property type="project" value="MGI"/>
</dbReference>
<dbReference type="GO" id="GO:0048286">
    <property type="term" value="P:lung alveolus development"/>
    <property type="evidence" value="ECO:0000315"/>
    <property type="project" value="UniProtKB"/>
</dbReference>
<dbReference type="GO" id="GO:0060428">
    <property type="term" value="P:lung epithelium development"/>
    <property type="evidence" value="ECO:0000315"/>
    <property type="project" value="UniProtKB"/>
</dbReference>
<dbReference type="GO" id="GO:0060426">
    <property type="term" value="P:lung vasculature development"/>
    <property type="evidence" value="ECO:0000315"/>
    <property type="project" value="UniProtKB"/>
</dbReference>
<dbReference type="GO" id="GO:1903243">
    <property type="term" value="P:negative regulation of cardiac muscle hypertrophy in response to stress"/>
    <property type="evidence" value="ECO:0007669"/>
    <property type="project" value="Ensembl"/>
</dbReference>
<dbReference type="GO" id="GO:0032966">
    <property type="term" value="P:negative regulation of collagen biosynthetic process"/>
    <property type="evidence" value="ECO:0007669"/>
    <property type="project" value="Ensembl"/>
</dbReference>
<dbReference type="GO" id="GO:0042059">
    <property type="term" value="P:negative regulation of epidermal growth factor receptor signaling pathway"/>
    <property type="evidence" value="ECO:0000315"/>
    <property type="project" value="UniProtKB"/>
</dbReference>
<dbReference type="GO" id="GO:0007175">
    <property type="term" value="P:negative regulation of epidermal growth factor-activated receptor activity"/>
    <property type="evidence" value="ECO:0000315"/>
    <property type="project" value="UniProtKB"/>
</dbReference>
<dbReference type="GO" id="GO:0070373">
    <property type="term" value="P:negative regulation of ERK1 and ERK2 cascade"/>
    <property type="evidence" value="ECO:0007669"/>
    <property type="project" value="Ensembl"/>
</dbReference>
<dbReference type="GO" id="GO:0032691">
    <property type="term" value="P:negative regulation of interleukin-1 beta production"/>
    <property type="evidence" value="ECO:0007669"/>
    <property type="project" value="Ensembl"/>
</dbReference>
<dbReference type="GO" id="GO:0050732">
    <property type="term" value="P:negative regulation of peptidyl-tyrosine phosphorylation"/>
    <property type="evidence" value="ECO:0000250"/>
    <property type="project" value="UniProtKB"/>
</dbReference>
<dbReference type="GO" id="GO:0031953">
    <property type="term" value="P:negative regulation of protein autophosphorylation"/>
    <property type="evidence" value="ECO:0000250"/>
    <property type="project" value="UniProtKB"/>
</dbReference>
<dbReference type="GO" id="GO:0032720">
    <property type="term" value="P:negative regulation of tumor necrosis factor production"/>
    <property type="evidence" value="ECO:0007669"/>
    <property type="project" value="Ensembl"/>
</dbReference>
<dbReference type="GO" id="GO:0043491">
    <property type="term" value="P:phosphatidylinositol 3-kinase/protein kinase B signal transduction"/>
    <property type="evidence" value="ECO:0000315"/>
    <property type="project" value="MGI"/>
</dbReference>
<dbReference type="GO" id="GO:0050847">
    <property type="term" value="P:progesterone receptor signaling pathway"/>
    <property type="evidence" value="ECO:0000315"/>
    <property type="project" value="MGI"/>
</dbReference>
<dbReference type="GO" id="GO:0072659">
    <property type="term" value="P:protein localization to plasma membrane"/>
    <property type="evidence" value="ECO:0000315"/>
    <property type="project" value="MGI"/>
</dbReference>
<dbReference type="GO" id="GO:0045616">
    <property type="term" value="P:regulation of keratinocyte differentiation"/>
    <property type="evidence" value="ECO:0000315"/>
    <property type="project" value="UniProtKB"/>
</dbReference>
<dbReference type="GO" id="GO:0061469">
    <property type="term" value="P:regulation of type B pancreatic cell proliferation"/>
    <property type="evidence" value="ECO:0007669"/>
    <property type="project" value="Ensembl"/>
</dbReference>
<dbReference type="GO" id="GO:1904565">
    <property type="term" value="P:response to 1-oleoyl-sn-glycerol 3-phosphate"/>
    <property type="evidence" value="ECO:0000314"/>
    <property type="project" value="MGI"/>
</dbReference>
<dbReference type="GO" id="GO:0032355">
    <property type="term" value="P:response to estradiol"/>
    <property type="evidence" value="ECO:0000314"/>
    <property type="project" value="MGI"/>
</dbReference>
<dbReference type="GO" id="GO:0032868">
    <property type="term" value="P:response to insulin"/>
    <property type="evidence" value="ECO:0000315"/>
    <property type="project" value="MGI"/>
</dbReference>
<dbReference type="GO" id="GO:0032570">
    <property type="term" value="P:response to progesterone"/>
    <property type="evidence" value="ECO:0000314"/>
    <property type="project" value="MGI"/>
</dbReference>
<dbReference type="GO" id="GO:0048545">
    <property type="term" value="P:response to steroid hormone"/>
    <property type="evidence" value="ECO:0000315"/>
    <property type="project" value="MGI"/>
</dbReference>
<dbReference type="GO" id="GO:0009410">
    <property type="term" value="P:response to xenobiotic stimulus"/>
    <property type="evidence" value="ECO:0000314"/>
    <property type="project" value="MGI"/>
</dbReference>
<dbReference type="GO" id="GO:0001501">
    <property type="term" value="P:skeletal system development"/>
    <property type="evidence" value="ECO:0000315"/>
    <property type="project" value="MGI"/>
</dbReference>
<dbReference type="GO" id="GO:0043588">
    <property type="term" value="P:skin development"/>
    <property type="evidence" value="ECO:0000315"/>
    <property type="project" value="MGI"/>
</dbReference>
<dbReference type="GO" id="GO:0043589">
    <property type="term" value="P:skin morphogenesis"/>
    <property type="evidence" value="ECO:0000315"/>
    <property type="project" value="UniProtKB"/>
</dbReference>
<dbReference type="GO" id="GO:0031098">
    <property type="term" value="P:stress-activated protein kinase signaling cascade"/>
    <property type="evidence" value="ECO:0000266"/>
    <property type="project" value="MGI"/>
</dbReference>
<dbReference type="GO" id="GO:0001894">
    <property type="term" value="P:tissue homeostasis"/>
    <property type="evidence" value="ECO:0000315"/>
    <property type="project" value="MGI"/>
</dbReference>
<dbReference type="GO" id="GO:0035847">
    <property type="term" value="P:uterine epithelium development"/>
    <property type="evidence" value="ECO:0000315"/>
    <property type="project" value="MGI"/>
</dbReference>
<dbReference type="GO" id="GO:0060065">
    <property type="term" value="P:uterus development"/>
    <property type="evidence" value="ECO:0000315"/>
    <property type="project" value="MGI"/>
</dbReference>
<dbReference type="InterPro" id="IPR015116">
    <property type="entry name" value="Cdc42-bd-like"/>
</dbReference>
<dbReference type="InterPro" id="IPR052112">
    <property type="entry name" value="EGFR_SigReg_Kinase"/>
</dbReference>
<dbReference type="InterPro" id="IPR021619">
    <property type="entry name" value="Mig-6"/>
</dbReference>
<dbReference type="PANTHER" id="PTHR14254:SF5">
    <property type="entry name" value="ERBB RECEPTOR FEEDBACK INHIBITOR 1"/>
    <property type="match status" value="1"/>
</dbReference>
<dbReference type="PANTHER" id="PTHR14254">
    <property type="entry name" value="GENE 33 POLYPEPTIDE"/>
    <property type="match status" value="1"/>
</dbReference>
<dbReference type="Pfam" id="PF09027">
    <property type="entry name" value="GTPase_binding"/>
    <property type="match status" value="1"/>
</dbReference>
<dbReference type="Pfam" id="PF11555">
    <property type="entry name" value="Inhibitor_Mig-6"/>
    <property type="match status" value="1"/>
</dbReference>
<evidence type="ECO:0000250" key="1"/>
<evidence type="ECO:0000250" key="2">
    <source>
        <dbReference type="UniProtKB" id="Q9UJM3"/>
    </source>
</evidence>
<evidence type="ECO:0000256" key="3">
    <source>
        <dbReference type="SAM" id="MobiDB-lite"/>
    </source>
</evidence>
<evidence type="ECO:0000269" key="4">
    <source>
    </source>
</evidence>
<evidence type="ECO:0000269" key="5">
    <source>
    </source>
</evidence>
<evidence type="ECO:0000269" key="6">
    <source>
    </source>
</evidence>
<evidence type="ECO:0000269" key="7">
    <source>
    </source>
</evidence>
<evidence type="ECO:0000269" key="8">
    <source>
    </source>
</evidence>
<evidence type="ECO:0000305" key="9"/>
<evidence type="ECO:0000305" key="10">
    <source>
    </source>
</evidence>
<evidence type="ECO:0007744" key="11">
    <source>
    </source>
</evidence>
<evidence type="ECO:0007744" key="12">
    <source>
    </source>
</evidence>